<comment type="similarity">
    <text evidence="1">Belongs to the UPF0502 family.</text>
</comment>
<protein>
    <recommendedName>
        <fullName evidence="1">UPF0502 protein Shew_1617</fullName>
    </recommendedName>
</protein>
<keyword id="KW-1185">Reference proteome</keyword>
<name>Y1617_SHELP</name>
<proteinExistence type="inferred from homology"/>
<evidence type="ECO:0000255" key="1">
    <source>
        <dbReference type="HAMAP-Rule" id="MF_01584"/>
    </source>
</evidence>
<sequence length="215" mass="23889">MKLTSHEARVIGCLLEKEKTTPEQYPLSLNGLTLACNQKSSREPVMNLSEADTQAALDSLAKKRLVAEQSGFGSRVVKYKHRFCNTEFSDLQLSEDKVAIICLLLLRGPQTAGELRTRSNRLYGFNDVAQVEQALNSLAQMEPALVRQLPREPGKRESRFIELISEAETQLDTQLATQPAQASSLANDELVERVALLEQQVAELKLQVAELLGKI</sequence>
<gene>
    <name type="ordered locus">Shew_1617</name>
</gene>
<feature type="chain" id="PRO_0000309426" description="UPF0502 protein Shew_1617">
    <location>
        <begin position="1"/>
        <end position="215"/>
    </location>
</feature>
<reference key="1">
    <citation type="submission" date="2007-03" db="EMBL/GenBank/DDBJ databases">
        <title>Complete sequence of Shewanella loihica PV-4.</title>
        <authorList>
            <consortium name="US DOE Joint Genome Institute"/>
            <person name="Copeland A."/>
            <person name="Lucas S."/>
            <person name="Lapidus A."/>
            <person name="Barry K."/>
            <person name="Detter J.C."/>
            <person name="Glavina del Rio T."/>
            <person name="Hammon N."/>
            <person name="Israni S."/>
            <person name="Dalin E."/>
            <person name="Tice H."/>
            <person name="Pitluck S."/>
            <person name="Chain P."/>
            <person name="Malfatti S."/>
            <person name="Shin M."/>
            <person name="Vergez L."/>
            <person name="Schmutz J."/>
            <person name="Larimer F."/>
            <person name="Land M."/>
            <person name="Hauser L."/>
            <person name="Kyrpides N."/>
            <person name="Mikhailova N."/>
            <person name="Romine M.F."/>
            <person name="Serres G."/>
            <person name="Fredrickson J."/>
            <person name="Tiedje J."/>
            <person name="Richardson P."/>
        </authorList>
    </citation>
    <scope>NUCLEOTIDE SEQUENCE [LARGE SCALE GENOMIC DNA]</scope>
    <source>
        <strain>ATCC BAA-1088 / PV-4</strain>
    </source>
</reference>
<organism>
    <name type="scientific">Shewanella loihica (strain ATCC BAA-1088 / PV-4)</name>
    <dbReference type="NCBI Taxonomy" id="323850"/>
    <lineage>
        <taxon>Bacteria</taxon>
        <taxon>Pseudomonadati</taxon>
        <taxon>Pseudomonadota</taxon>
        <taxon>Gammaproteobacteria</taxon>
        <taxon>Alteromonadales</taxon>
        <taxon>Shewanellaceae</taxon>
        <taxon>Shewanella</taxon>
    </lineage>
</organism>
<dbReference type="EMBL" id="CP000606">
    <property type="protein sequence ID" value="ABO23484.1"/>
    <property type="molecule type" value="Genomic_DNA"/>
</dbReference>
<dbReference type="RefSeq" id="WP_011865416.1">
    <property type="nucleotide sequence ID" value="NC_009092.1"/>
</dbReference>
<dbReference type="SMR" id="A3QDD6"/>
<dbReference type="STRING" id="323850.Shew_1617"/>
<dbReference type="KEGG" id="slo:Shew_1617"/>
<dbReference type="eggNOG" id="COG3132">
    <property type="taxonomic scope" value="Bacteria"/>
</dbReference>
<dbReference type="HOGENOM" id="CLU_057831_2_0_6"/>
<dbReference type="OrthoDB" id="9784785at2"/>
<dbReference type="Proteomes" id="UP000001558">
    <property type="component" value="Chromosome"/>
</dbReference>
<dbReference type="Gene3D" id="1.10.10.10">
    <property type="entry name" value="Winged helix-like DNA-binding domain superfamily/Winged helix DNA-binding domain"/>
    <property type="match status" value="2"/>
</dbReference>
<dbReference type="HAMAP" id="MF_01584">
    <property type="entry name" value="UPF0502"/>
    <property type="match status" value="1"/>
</dbReference>
<dbReference type="InterPro" id="IPR007432">
    <property type="entry name" value="DUF480"/>
</dbReference>
<dbReference type="InterPro" id="IPR036388">
    <property type="entry name" value="WH-like_DNA-bd_sf"/>
</dbReference>
<dbReference type="InterPro" id="IPR036390">
    <property type="entry name" value="WH_DNA-bd_sf"/>
</dbReference>
<dbReference type="PANTHER" id="PTHR38768">
    <property type="entry name" value="UPF0502 PROTEIN YCEH"/>
    <property type="match status" value="1"/>
</dbReference>
<dbReference type="PANTHER" id="PTHR38768:SF1">
    <property type="entry name" value="UPF0502 PROTEIN YCEH"/>
    <property type="match status" value="1"/>
</dbReference>
<dbReference type="Pfam" id="PF04337">
    <property type="entry name" value="DUF480"/>
    <property type="match status" value="1"/>
</dbReference>
<dbReference type="SUPFAM" id="SSF46785">
    <property type="entry name" value="Winged helix' DNA-binding domain"/>
    <property type="match status" value="2"/>
</dbReference>
<accession>A3QDD6</accession>